<evidence type="ECO:0000255" key="1">
    <source>
        <dbReference type="HAMAP-Rule" id="MF_00600"/>
    </source>
</evidence>
<keyword id="KW-0067">ATP-binding</keyword>
<keyword id="KW-0143">Chaperone</keyword>
<keyword id="KW-0963">Cytoplasm</keyword>
<keyword id="KW-0413">Isomerase</keyword>
<keyword id="KW-0547">Nucleotide-binding</keyword>
<keyword id="KW-1185">Reference proteome</keyword>
<dbReference type="EC" id="5.6.1.7" evidence="1"/>
<dbReference type="EMBL" id="AE014133">
    <property type="protein sequence ID" value="AAN59561.1"/>
    <property type="molecule type" value="Genomic_DNA"/>
</dbReference>
<dbReference type="RefSeq" id="NP_722255.1">
    <property type="nucleotide sequence ID" value="NC_004350.2"/>
</dbReference>
<dbReference type="RefSeq" id="WP_002262148.1">
    <property type="nucleotide sequence ID" value="NC_004350.2"/>
</dbReference>
<dbReference type="SMR" id="Q8CWW6"/>
<dbReference type="STRING" id="210007.SMU_1954"/>
<dbReference type="GeneID" id="93858659"/>
<dbReference type="KEGG" id="smu:SMU_1954"/>
<dbReference type="PATRIC" id="fig|210007.7.peg.1737"/>
<dbReference type="eggNOG" id="COG0459">
    <property type="taxonomic scope" value="Bacteria"/>
</dbReference>
<dbReference type="HOGENOM" id="CLU_016503_3_0_9"/>
<dbReference type="OrthoDB" id="9766614at2"/>
<dbReference type="PhylomeDB" id="Q8CWW6"/>
<dbReference type="Proteomes" id="UP000002512">
    <property type="component" value="Chromosome"/>
</dbReference>
<dbReference type="GO" id="GO:0005737">
    <property type="term" value="C:cytoplasm"/>
    <property type="evidence" value="ECO:0007669"/>
    <property type="project" value="UniProtKB-SubCell"/>
</dbReference>
<dbReference type="GO" id="GO:0005524">
    <property type="term" value="F:ATP binding"/>
    <property type="evidence" value="ECO:0007669"/>
    <property type="project" value="UniProtKB-UniRule"/>
</dbReference>
<dbReference type="GO" id="GO:0140662">
    <property type="term" value="F:ATP-dependent protein folding chaperone"/>
    <property type="evidence" value="ECO:0007669"/>
    <property type="project" value="InterPro"/>
</dbReference>
<dbReference type="GO" id="GO:0016853">
    <property type="term" value="F:isomerase activity"/>
    <property type="evidence" value="ECO:0007669"/>
    <property type="project" value="UniProtKB-KW"/>
</dbReference>
<dbReference type="GO" id="GO:0051082">
    <property type="term" value="F:unfolded protein binding"/>
    <property type="evidence" value="ECO:0007669"/>
    <property type="project" value="UniProtKB-UniRule"/>
</dbReference>
<dbReference type="GO" id="GO:0042026">
    <property type="term" value="P:protein refolding"/>
    <property type="evidence" value="ECO:0007669"/>
    <property type="project" value="UniProtKB-UniRule"/>
</dbReference>
<dbReference type="CDD" id="cd03344">
    <property type="entry name" value="GroEL"/>
    <property type="match status" value="1"/>
</dbReference>
<dbReference type="FunFam" id="1.10.560.10:FF:000001">
    <property type="entry name" value="60 kDa chaperonin"/>
    <property type="match status" value="1"/>
</dbReference>
<dbReference type="FunFam" id="3.50.7.10:FF:000001">
    <property type="entry name" value="60 kDa chaperonin"/>
    <property type="match status" value="1"/>
</dbReference>
<dbReference type="Gene3D" id="3.50.7.10">
    <property type="entry name" value="GroEL"/>
    <property type="match status" value="1"/>
</dbReference>
<dbReference type="Gene3D" id="1.10.560.10">
    <property type="entry name" value="GroEL-like equatorial domain"/>
    <property type="match status" value="1"/>
</dbReference>
<dbReference type="Gene3D" id="3.30.260.10">
    <property type="entry name" value="TCP-1-like chaperonin intermediate domain"/>
    <property type="match status" value="1"/>
</dbReference>
<dbReference type="HAMAP" id="MF_00600">
    <property type="entry name" value="CH60"/>
    <property type="match status" value="1"/>
</dbReference>
<dbReference type="InterPro" id="IPR018370">
    <property type="entry name" value="Chaperonin_Cpn60_CS"/>
</dbReference>
<dbReference type="InterPro" id="IPR001844">
    <property type="entry name" value="Cpn60/GroEL"/>
</dbReference>
<dbReference type="InterPro" id="IPR002423">
    <property type="entry name" value="Cpn60/GroEL/TCP-1"/>
</dbReference>
<dbReference type="InterPro" id="IPR027409">
    <property type="entry name" value="GroEL-like_apical_dom_sf"/>
</dbReference>
<dbReference type="InterPro" id="IPR027413">
    <property type="entry name" value="GROEL-like_equatorial_sf"/>
</dbReference>
<dbReference type="InterPro" id="IPR027410">
    <property type="entry name" value="TCP-1-like_intermed_sf"/>
</dbReference>
<dbReference type="NCBIfam" id="TIGR02348">
    <property type="entry name" value="GroEL"/>
    <property type="match status" value="1"/>
</dbReference>
<dbReference type="NCBIfam" id="NF000592">
    <property type="entry name" value="PRK00013.1"/>
    <property type="match status" value="1"/>
</dbReference>
<dbReference type="NCBIfam" id="NF009487">
    <property type="entry name" value="PRK12849.1"/>
    <property type="match status" value="1"/>
</dbReference>
<dbReference type="NCBIfam" id="NF009488">
    <property type="entry name" value="PRK12850.1"/>
    <property type="match status" value="1"/>
</dbReference>
<dbReference type="NCBIfam" id="NF009489">
    <property type="entry name" value="PRK12851.1"/>
    <property type="match status" value="1"/>
</dbReference>
<dbReference type="PANTHER" id="PTHR45633">
    <property type="entry name" value="60 KDA HEAT SHOCK PROTEIN, MITOCHONDRIAL"/>
    <property type="match status" value="1"/>
</dbReference>
<dbReference type="Pfam" id="PF00118">
    <property type="entry name" value="Cpn60_TCP1"/>
    <property type="match status" value="1"/>
</dbReference>
<dbReference type="PRINTS" id="PR00298">
    <property type="entry name" value="CHAPERONIN60"/>
</dbReference>
<dbReference type="SUPFAM" id="SSF52029">
    <property type="entry name" value="GroEL apical domain-like"/>
    <property type="match status" value="1"/>
</dbReference>
<dbReference type="SUPFAM" id="SSF48592">
    <property type="entry name" value="GroEL equatorial domain-like"/>
    <property type="match status" value="1"/>
</dbReference>
<dbReference type="SUPFAM" id="SSF54849">
    <property type="entry name" value="GroEL-intermediate domain like"/>
    <property type="match status" value="1"/>
</dbReference>
<dbReference type="PROSITE" id="PS00296">
    <property type="entry name" value="CHAPERONINS_CPN60"/>
    <property type="match status" value="1"/>
</dbReference>
<reference key="1">
    <citation type="journal article" date="2002" name="Proc. Natl. Acad. Sci. U.S.A.">
        <title>Genome sequence of Streptococcus mutans UA159, a cariogenic dental pathogen.</title>
        <authorList>
            <person name="Ajdic D.J."/>
            <person name="McShan W.M."/>
            <person name="McLaughlin R.E."/>
            <person name="Savic G."/>
            <person name="Chang J."/>
            <person name="Carson M.B."/>
            <person name="Primeaux C."/>
            <person name="Tian R."/>
            <person name="Kenton S."/>
            <person name="Jia H.G."/>
            <person name="Lin S.P."/>
            <person name="Qian Y."/>
            <person name="Li S."/>
            <person name="Zhu H."/>
            <person name="Najar F.Z."/>
            <person name="Lai H."/>
            <person name="White J."/>
            <person name="Roe B.A."/>
            <person name="Ferretti J.J."/>
        </authorList>
    </citation>
    <scope>NUCLEOTIDE SEQUENCE [LARGE SCALE GENOMIC DNA]</scope>
    <source>
        <strain>ATCC 700610 / UA159</strain>
    </source>
</reference>
<proteinExistence type="inferred from homology"/>
<sequence length="542" mass="57101">MAKDIKFSADARSSMVRGVDILADTVKVTLGPKGRNVVLEKSFGSPLITNDGVTIAKEIELEDHFENMGAKLVSEVASKTNDIAGDGTTTATVLTQAIVREGLKNVTAGANPIGIRRGIETAVATAVDELKAIAQPVSGKEAIAQVAAVSSRSEKVGEYVSEAMEKVGNDGVITIEESRGMETELDVVEGMQFDRGYLSQYMVTDNEKMVADLENPYLLITDKKISNIQDVLPLLEEVLKTNRPLLIIADDVDGEALPTLVLNKIRGTFNVVAVKAPGFGDRRKAMLEDIAVLTGGTVITEDLGLELKDTTIDALGQAARVTVDKDSTVIVEGSGGKEAVANRVNLIKSQIETATSDFDREKLQERLAKLSGGVAVIKVGAATETELKEMKLRIEDALNATRAAVEEGIVAGGGTALINVIEKVAALDLTDDAATGRNLVLRALEEPVRQIAKNAGYEGSVIIDKLKNSSAGTGFNAANGEWVDMIDAGIIDPVKVTRSALQNAASVASLILTTEAVVADHPAPEAPAAAPAMDPSMMGGMM</sequence>
<accession>Q8CWW6</accession>
<comment type="function">
    <text evidence="1">Together with its co-chaperonin GroES, plays an essential role in assisting protein folding. The GroEL-GroES system forms a nano-cage that allows encapsulation of the non-native substrate proteins and provides a physical environment optimized to promote and accelerate protein folding.</text>
</comment>
<comment type="catalytic activity">
    <reaction evidence="1">
        <text>ATP + H2O + a folded polypeptide = ADP + phosphate + an unfolded polypeptide.</text>
        <dbReference type="EC" id="5.6.1.7"/>
    </reaction>
</comment>
<comment type="subunit">
    <text evidence="1">Forms a cylinder of 14 subunits composed of two heptameric rings stacked back-to-back. Interacts with the co-chaperonin GroES.</text>
</comment>
<comment type="subcellular location">
    <subcellularLocation>
        <location evidence="1">Cytoplasm</location>
    </subcellularLocation>
</comment>
<comment type="similarity">
    <text evidence="1">Belongs to the chaperonin (HSP60) family.</text>
</comment>
<name>CH60_STRMU</name>
<organism>
    <name type="scientific">Streptococcus mutans serotype c (strain ATCC 700610 / UA159)</name>
    <dbReference type="NCBI Taxonomy" id="210007"/>
    <lineage>
        <taxon>Bacteria</taxon>
        <taxon>Bacillati</taxon>
        <taxon>Bacillota</taxon>
        <taxon>Bacilli</taxon>
        <taxon>Lactobacillales</taxon>
        <taxon>Streptococcaceae</taxon>
        <taxon>Streptococcus</taxon>
    </lineage>
</organism>
<feature type="chain" id="PRO_0000063555" description="Chaperonin GroEL">
    <location>
        <begin position="1"/>
        <end position="542"/>
    </location>
</feature>
<feature type="binding site" evidence="1">
    <location>
        <begin position="29"/>
        <end position="32"/>
    </location>
    <ligand>
        <name>ATP</name>
        <dbReference type="ChEBI" id="CHEBI:30616"/>
    </ligand>
</feature>
<feature type="binding site" evidence="1">
    <location>
        <begin position="86"/>
        <end position="90"/>
    </location>
    <ligand>
        <name>ATP</name>
        <dbReference type="ChEBI" id="CHEBI:30616"/>
    </ligand>
</feature>
<feature type="binding site" evidence="1">
    <location>
        <position position="413"/>
    </location>
    <ligand>
        <name>ATP</name>
        <dbReference type="ChEBI" id="CHEBI:30616"/>
    </ligand>
</feature>
<feature type="binding site" evidence="1">
    <location>
        <begin position="476"/>
        <end position="478"/>
    </location>
    <ligand>
        <name>ATP</name>
        <dbReference type="ChEBI" id="CHEBI:30616"/>
    </ligand>
</feature>
<feature type="binding site" evidence="1">
    <location>
        <position position="492"/>
    </location>
    <ligand>
        <name>ATP</name>
        <dbReference type="ChEBI" id="CHEBI:30616"/>
    </ligand>
</feature>
<protein>
    <recommendedName>
        <fullName evidence="1">Chaperonin GroEL</fullName>
        <ecNumber evidence="1">5.6.1.7</ecNumber>
    </recommendedName>
    <alternativeName>
        <fullName evidence="1">60 kDa chaperonin</fullName>
    </alternativeName>
    <alternativeName>
        <fullName evidence="1">Chaperonin-60</fullName>
        <shortName evidence="1">Cpn60</shortName>
    </alternativeName>
</protein>
<gene>
    <name evidence="1" type="primary">groEL</name>
    <name evidence="1" type="synonym">groL</name>
    <name type="ordered locus">SMU_1954</name>
</gene>